<reference key="1">
    <citation type="journal article" date="1992" name="J. Bacteriol.">
        <title>The cadC gene product of alkaliphilic Bacillus firmus OF4 partially restores Na+ resistance to an Escherichia coli strain lacking an Na+/H+ antiporter (NhaA).</title>
        <authorList>
            <person name="Ivey D.M."/>
            <person name="Guffanti A.A."/>
            <person name="Shen Z."/>
            <person name="Kudyan N."/>
            <person name="Krulwich T.A."/>
        </authorList>
    </citation>
    <scope>NUCLEOTIDE SEQUENCE [GENOMIC DNA]</scope>
</reference>
<reference key="2">
    <citation type="journal article" date="2011" name="Environ. Microbiol.">
        <title>Genome of alkaliphilic Bacillus pseudofirmus OF4 reveals adaptations that support the ability to grow in an external pH range from 7.5 to 11.4.</title>
        <authorList>
            <person name="Janto B."/>
            <person name="Ahmed A."/>
            <person name="Ito M."/>
            <person name="Liu J."/>
            <person name="Hicks D.B."/>
            <person name="Pagni S."/>
            <person name="Fackelmayer O.J."/>
            <person name="Smith T.A."/>
            <person name="Earl J."/>
            <person name="Elbourne L.D."/>
            <person name="Hassan K."/>
            <person name="Paulsen I.T."/>
            <person name="Kolsto A.B."/>
            <person name="Tourasse N.J."/>
            <person name="Ehrlich G.D."/>
            <person name="Boissy R."/>
            <person name="Ivey D.M."/>
            <person name="Li G."/>
            <person name="Xue Y."/>
            <person name="Ma Y."/>
            <person name="Hu F.Z."/>
            <person name="Krulwich T.A."/>
        </authorList>
    </citation>
    <scope>NUCLEOTIDE SEQUENCE [LARGE SCALE GENOMIC DNA]</scope>
    <source>
        <strain>ATCC BAA-2126 / JCM 17055 / OF4</strain>
        <plasmid>pBpOF4-02</plasmid>
    </source>
</reference>
<evidence type="ECO:0000250" key="1"/>
<evidence type="ECO:0000255" key="2">
    <source>
        <dbReference type="PROSITE-ProRule" id="PRU00340"/>
    </source>
</evidence>
<evidence type="ECO:0000305" key="3"/>
<proteinExistence type="inferred from homology"/>
<gene>
    <name type="primary">cadC</name>
    <name type="ordered locus">BpOF4_21829</name>
</gene>
<accession>P30339</accession>
<accession>D3G1Y5</accession>
<comment type="function">
    <text evidence="1">Metal-binding repressor for the cad operon. Involved in resistance to heavy metals, such as cadmium, bismuth, zinc or lead. Metal binding causes the repressor to dissociate from the DNA (By similarity).</text>
</comment>
<comment type="subunit">
    <text evidence="1">Homodimer.</text>
</comment>
<dbReference type="EMBL" id="M90750">
    <property type="protein sequence ID" value="AAA22857.1"/>
    <property type="molecule type" value="Genomic_DNA"/>
</dbReference>
<dbReference type="EMBL" id="CP001880">
    <property type="protein sequence ID" value="ADC52361.1"/>
    <property type="molecule type" value="Genomic_DNA"/>
</dbReference>
<dbReference type="RefSeq" id="WP_003322301.1">
    <property type="nucleotide sequence ID" value="NC_013793.1"/>
</dbReference>
<dbReference type="SMR" id="P30339"/>
<dbReference type="KEGG" id="bpf:BpOF4_21829"/>
<dbReference type="HOGENOM" id="CLU_097806_7_3_9"/>
<dbReference type="Proteomes" id="UP000001544">
    <property type="component" value="Plasmid pBpOF4-02"/>
</dbReference>
<dbReference type="GO" id="GO:0003677">
    <property type="term" value="F:DNA binding"/>
    <property type="evidence" value="ECO:0007669"/>
    <property type="project" value="UniProtKB-KW"/>
</dbReference>
<dbReference type="GO" id="GO:0003700">
    <property type="term" value="F:DNA-binding transcription factor activity"/>
    <property type="evidence" value="ECO:0007669"/>
    <property type="project" value="InterPro"/>
</dbReference>
<dbReference type="GO" id="GO:0046872">
    <property type="term" value="F:metal ion binding"/>
    <property type="evidence" value="ECO:0007669"/>
    <property type="project" value="UniProtKB-KW"/>
</dbReference>
<dbReference type="GO" id="GO:0046686">
    <property type="term" value="P:response to cadmium ion"/>
    <property type="evidence" value="ECO:0007669"/>
    <property type="project" value="UniProtKB-KW"/>
</dbReference>
<dbReference type="CDD" id="cd00090">
    <property type="entry name" value="HTH_ARSR"/>
    <property type="match status" value="1"/>
</dbReference>
<dbReference type="Gene3D" id="1.10.10.10">
    <property type="entry name" value="Winged helix-like DNA-binding domain superfamily/Winged helix DNA-binding domain"/>
    <property type="match status" value="1"/>
</dbReference>
<dbReference type="InterPro" id="IPR011991">
    <property type="entry name" value="ArsR-like_HTH"/>
</dbReference>
<dbReference type="InterPro" id="IPR018334">
    <property type="entry name" value="ArsR_HTH"/>
</dbReference>
<dbReference type="InterPro" id="IPR001845">
    <property type="entry name" value="HTH_ArsR_DNA-bd_dom"/>
</dbReference>
<dbReference type="InterPro" id="IPR051011">
    <property type="entry name" value="Metal_resp_trans_reg"/>
</dbReference>
<dbReference type="InterPro" id="IPR036388">
    <property type="entry name" value="WH-like_DNA-bd_sf"/>
</dbReference>
<dbReference type="InterPro" id="IPR036390">
    <property type="entry name" value="WH_DNA-bd_sf"/>
</dbReference>
<dbReference type="NCBIfam" id="NF033788">
    <property type="entry name" value="HTH_metalloreg"/>
    <property type="match status" value="1"/>
</dbReference>
<dbReference type="PANTHER" id="PTHR43132">
    <property type="entry name" value="ARSENICAL RESISTANCE OPERON REPRESSOR ARSR-RELATED"/>
    <property type="match status" value="1"/>
</dbReference>
<dbReference type="PANTHER" id="PTHR43132:SF6">
    <property type="entry name" value="HTH-TYPE TRANSCRIPTIONAL REPRESSOR CZRA"/>
    <property type="match status" value="1"/>
</dbReference>
<dbReference type="Pfam" id="PF01022">
    <property type="entry name" value="HTH_5"/>
    <property type="match status" value="1"/>
</dbReference>
<dbReference type="PRINTS" id="PR00778">
    <property type="entry name" value="HTHARSR"/>
</dbReference>
<dbReference type="SMART" id="SM00418">
    <property type="entry name" value="HTH_ARSR"/>
    <property type="match status" value="1"/>
</dbReference>
<dbReference type="SUPFAM" id="SSF46785">
    <property type="entry name" value="Winged helix' DNA-binding domain"/>
    <property type="match status" value="1"/>
</dbReference>
<dbReference type="PROSITE" id="PS00846">
    <property type="entry name" value="HTH_ARSR_1"/>
    <property type="match status" value="1"/>
</dbReference>
<dbReference type="PROSITE" id="PS50987">
    <property type="entry name" value="HTH_ARSR_2"/>
    <property type="match status" value="1"/>
</dbReference>
<protein>
    <recommendedName>
        <fullName>Cadmium resistance transcriptional regulatory protein CadC</fullName>
    </recommendedName>
    <alternativeName>
        <fullName>Cadmium efflux system accessory protein</fullName>
    </alternativeName>
</protein>
<name>CADC_ALKPO</name>
<organism>
    <name type="scientific">Alkalihalophilus pseudofirmus (strain ATCC BAA-2126 / JCM 17055 / OF4)</name>
    <name type="common">Bacillus pseudofirmus</name>
    <dbReference type="NCBI Taxonomy" id="398511"/>
    <lineage>
        <taxon>Bacteria</taxon>
        <taxon>Bacillati</taxon>
        <taxon>Bacillota</taxon>
        <taxon>Bacilli</taxon>
        <taxon>Bacillales</taxon>
        <taxon>Bacillaceae</taxon>
        <taxon>Alkalihalophilus</taxon>
    </lineage>
</organism>
<sequence length="122" mass="14033">MNKKDTCEIFCYDEEKVNRIQGDLKTIDIVSVAQMLKAIADENRAKITYALCQDEELCVCDIANIIGITVANASHHLRTLHKQGIVRYRKEGKLAFYSLDDEHIRQIMMIVLEHKKEVNVNV</sequence>
<keyword id="KW-0104">Cadmium</keyword>
<keyword id="KW-0105">Cadmium resistance</keyword>
<keyword id="KW-0238">DNA-binding</keyword>
<keyword id="KW-0479">Metal-binding</keyword>
<keyword id="KW-0614">Plasmid</keyword>
<keyword id="KW-1185">Reference proteome</keyword>
<keyword id="KW-0804">Transcription</keyword>
<keyword id="KW-0805">Transcription regulation</keyword>
<geneLocation type="plasmid">
    <name>pBpOF4-02</name>
</geneLocation>
<feature type="chain" id="PRO_0000160616" description="Cadmium resistance transcriptional regulatory protein CadC">
    <location>
        <begin position="1"/>
        <end position="122"/>
    </location>
</feature>
<feature type="domain" description="HTH arsR-type" evidence="2">
    <location>
        <begin position="24"/>
        <end position="119"/>
    </location>
</feature>
<feature type="DNA-binding region" description="H-T-H motif" evidence="2">
    <location>
        <begin position="59"/>
        <end position="78"/>
    </location>
</feature>
<feature type="binding site" evidence="2">
    <location>
        <position position="7"/>
    </location>
    <ligand>
        <name>Cd(2+)</name>
        <dbReference type="ChEBI" id="CHEBI:48775"/>
        <note>ligand shared between dimeric partners</note>
    </ligand>
</feature>
<feature type="binding site" evidence="2">
    <location>
        <position position="11"/>
    </location>
    <ligand>
        <name>Cd(2+)</name>
        <dbReference type="ChEBI" id="CHEBI:48775"/>
        <note>ligand shared between dimeric partners</note>
    </ligand>
</feature>
<feature type="binding site" evidence="2">
    <location>
        <position position="58"/>
    </location>
    <ligand>
        <name>Cd(2+)</name>
        <dbReference type="ChEBI" id="CHEBI:48775"/>
        <note>ligand shared between dimeric partners</note>
    </ligand>
</feature>
<feature type="binding site" evidence="2">
    <location>
        <position position="60"/>
    </location>
    <ligand>
        <name>Cd(2+)</name>
        <dbReference type="ChEBI" id="CHEBI:48775"/>
        <note>ligand shared between dimeric partners</note>
    </ligand>
</feature>
<feature type="sequence conflict" description="In Ref. 1; AAA22857." evidence="3" ref="1">
    <original>L</original>
    <variation>S</variation>
    <location>
        <position position="57"/>
    </location>
</feature>
<feature type="sequence conflict" description="In Ref. 1; AAA22857." evidence="3" ref="1">
    <original>V</original>
    <variation>A</variation>
    <location>
        <position position="70"/>
    </location>
</feature>